<reference key="1">
    <citation type="journal article" date="2004" name="Nucleic Acids Res.">
        <title>Thermoadaptation trait revealed by the genome sequence of thermophilic Geobacillus kaustophilus.</title>
        <authorList>
            <person name="Takami H."/>
            <person name="Takaki Y."/>
            <person name="Chee G.-J."/>
            <person name="Nishi S."/>
            <person name="Shimamura S."/>
            <person name="Suzuki H."/>
            <person name="Matsui S."/>
            <person name="Uchiyama I."/>
        </authorList>
    </citation>
    <scope>NUCLEOTIDE SEQUENCE [LARGE SCALE GENOMIC DNA]</scope>
    <source>
        <strain>HTA426</strain>
    </source>
</reference>
<gene>
    <name type="primary">norM</name>
    <name type="ordered locus">GK1589</name>
</gene>
<feature type="chain" id="PRO_0000164217" description="Probable multidrug resistance protein NorM">
    <location>
        <begin position="1"/>
        <end position="455"/>
    </location>
</feature>
<feature type="transmembrane region" description="Helical" evidence="2">
    <location>
        <begin position="13"/>
        <end position="31"/>
    </location>
</feature>
<feature type="transmembrane region" description="Helical" evidence="2">
    <location>
        <begin position="51"/>
        <end position="73"/>
    </location>
</feature>
<feature type="transmembrane region" description="Helical" evidence="2">
    <location>
        <begin position="94"/>
        <end position="116"/>
    </location>
</feature>
<feature type="transmembrane region" description="Helical" evidence="2">
    <location>
        <begin position="131"/>
        <end position="150"/>
    </location>
</feature>
<feature type="transmembrane region" description="Helical" evidence="2">
    <location>
        <begin position="162"/>
        <end position="184"/>
    </location>
</feature>
<feature type="transmembrane region" description="Helical" evidence="2">
    <location>
        <begin position="194"/>
        <end position="216"/>
    </location>
</feature>
<feature type="transmembrane region" description="Helical" evidence="2">
    <location>
        <begin position="245"/>
        <end position="267"/>
    </location>
</feature>
<feature type="transmembrane region" description="Helical" evidence="2">
    <location>
        <begin position="282"/>
        <end position="304"/>
    </location>
</feature>
<feature type="transmembrane region" description="Helical" evidence="2">
    <location>
        <begin position="317"/>
        <end position="339"/>
    </location>
</feature>
<feature type="transmembrane region" description="Helical" evidence="2">
    <location>
        <begin position="352"/>
        <end position="369"/>
    </location>
</feature>
<feature type="transmembrane region" description="Helical" evidence="2">
    <location>
        <begin position="390"/>
        <end position="412"/>
    </location>
</feature>
<feature type="transmembrane region" description="Helical" evidence="2">
    <location>
        <begin position="417"/>
        <end position="439"/>
    </location>
</feature>
<proteinExistence type="inferred from homology"/>
<evidence type="ECO:0000250" key="1"/>
<evidence type="ECO:0000255" key="2"/>
<evidence type="ECO:0000305" key="3"/>
<organism>
    <name type="scientific">Geobacillus kaustophilus (strain HTA426)</name>
    <dbReference type="NCBI Taxonomy" id="235909"/>
    <lineage>
        <taxon>Bacteria</taxon>
        <taxon>Bacillati</taxon>
        <taxon>Bacillota</taxon>
        <taxon>Bacilli</taxon>
        <taxon>Bacillales</taxon>
        <taxon>Anoxybacillaceae</taxon>
        <taxon>Geobacillus</taxon>
        <taxon>Geobacillus thermoleovorans group</taxon>
    </lineage>
</organism>
<comment type="function">
    <text evidence="1">Multidrug efflux pump.</text>
</comment>
<comment type="subcellular location">
    <subcellularLocation>
        <location evidence="1">Cell membrane</location>
        <topology evidence="1">Multi-pass membrane protein</topology>
    </subcellularLocation>
</comment>
<comment type="similarity">
    <text evidence="3">Belongs to the multi antimicrobial extrusion (MATE) (TC 2.A.66.1) family.</text>
</comment>
<keyword id="KW-0050">Antiport</keyword>
<keyword id="KW-1003">Cell membrane</keyword>
<keyword id="KW-0406">Ion transport</keyword>
<keyword id="KW-0472">Membrane</keyword>
<keyword id="KW-1185">Reference proteome</keyword>
<keyword id="KW-0812">Transmembrane</keyword>
<keyword id="KW-1133">Transmembrane helix</keyword>
<keyword id="KW-0813">Transport</keyword>
<sequence>MATTAPPNGKWRRLFALFLPIFVSQTGQYAMNFVDVAMSGHASAEDLAGVAIGSSLWVPVFTGAGGILLALSPIVSHHFGAGRHDSITRAVAQALYLAVALAVAIVLIGAAAVPFILKQMSLDENVRHIAFHYLRALSFGIIPLFLYSVLRYFIDALGQTKVTMWITLTALPVNMLFNWLLIYGHGGFPRLGGIGTGYATAITYAYCFAAAAFAALKFRRLAPYRVLVRFYRPSWAAWKELLKTGVPIGSAIFFETSIFAAVTLLVGRFGAETVAAHQSALNFASLLYMIPLSLSMALTIAVGVEAGANRYEAAKQYCLIGITLALAVAAAAALFLSAFRSHVARLYTNDPTVAALTGKFLLYAIFFQVSDAIAAPIQGALRGYKEVNAVFWSALLAYWGVGLPLGCALALLTAAGAFGYWIGLIAGLATGALFLSFRLRAVWRRHDSGRAPCAF</sequence>
<name>NORM_GEOKA</name>
<protein>
    <recommendedName>
        <fullName>Probable multidrug resistance protein NorM</fullName>
    </recommendedName>
    <alternativeName>
        <fullName>Multidrug-efflux transporter</fullName>
    </alternativeName>
</protein>
<dbReference type="EMBL" id="BA000043">
    <property type="protein sequence ID" value="BAD75874.1"/>
    <property type="molecule type" value="Genomic_DNA"/>
</dbReference>
<dbReference type="RefSeq" id="WP_011231084.1">
    <property type="nucleotide sequence ID" value="NC_006510.1"/>
</dbReference>
<dbReference type="SMR" id="Q5KZL2"/>
<dbReference type="STRING" id="235909.GK1589"/>
<dbReference type="KEGG" id="gka:GK1589"/>
<dbReference type="eggNOG" id="COG0534">
    <property type="taxonomic scope" value="Bacteria"/>
</dbReference>
<dbReference type="HOGENOM" id="CLU_012893_6_0_9"/>
<dbReference type="Proteomes" id="UP000001172">
    <property type="component" value="Chromosome"/>
</dbReference>
<dbReference type="GO" id="GO:0005886">
    <property type="term" value="C:plasma membrane"/>
    <property type="evidence" value="ECO:0007669"/>
    <property type="project" value="UniProtKB-SubCell"/>
</dbReference>
<dbReference type="GO" id="GO:0015297">
    <property type="term" value="F:antiporter activity"/>
    <property type="evidence" value="ECO:0007669"/>
    <property type="project" value="UniProtKB-KW"/>
</dbReference>
<dbReference type="GO" id="GO:0042910">
    <property type="term" value="F:xenobiotic transmembrane transporter activity"/>
    <property type="evidence" value="ECO:0007669"/>
    <property type="project" value="InterPro"/>
</dbReference>
<dbReference type="GO" id="GO:0006811">
    <property type="term" value="P:monoatomic ion transport"/>
    <property type="evidence" value="ECO:0007669"/>
    <property type="project" value="UniProtKB-KW"/>
</dbReference>
<dbReference type="CDD" id="cd13131">
    <property type="entry name" value="MATE_NorM_like"/>
    <property type="match status" value="1"/>
</dbReference>
<dbReference type="InterPro" id="IPR002528">
    <property type="entry name" value="MATE_fam"/>
</dbReference>
<dbReference type="InterPro" id="IPR050222">
    <property type="entry name" value="MATE_MdtK"/>
</dbReference>
<dbReference type="InterPro" id="IPR048279">
    <property type="entry name" value="MdtK-like"/>
</dbReference>
<dbReference type="NCBIfam" id="TIGR00797">
    <property type="entry name" value="matE"/>
    <property type="match status" value="1"/>
</dbReference>
<dbReference type="PANTHER" id="PTHR43298:SF2">
    <property type="entry name" value="FMN_FAD EXPORTER YEEO-RELATED"/>
    <property type="match status" value="1"/>
</dbReference>
<dbReference type="PANTHER" id="PTHR43298">
    <property type="entry name" value="MULTIDRUG RESISTANCE PROTEIN NORM-RELATED"/>
    <property type="match status" value="1"/>
</dbReference>
<dbReference type="Pfam" id="PF01554">
    <property type="entry name" value="MatE"/>
    <property type="match status" value="2"/>
</dbReference>
<dbReference type="PIRSF" id="PIRSF006603">
    <property type="entry name" value="DinF"/>
    <property type="match status" value="1"/>
</dbReference>
<accession>Q5KZL2</accession>